<name>RMC1_DROME</name>
<feature type="chain" id="PRO_0000459502" description="Regulator of MON1-CCZ1 complex">
    <location>
        <begin position="1"/>
        <end position="642"/>
    </location>
</feature>
<feature type="domain" description="Mic1" evidence="1">
    <location>
        <begin position="462"/>
        <end position="616"/>
    </location>
</feature>
<feature type="mutagenesis site" description="Reduced interaction with Ccz1; when associated with R-539." evidence="4">
    <original>Q</original>
    <variation>A</variation>
    <location>
        <position position="535"/>
    </location>
</feature>
<feature type="mutagenesis site" description="Loss of interaction with Ccz1; when associated with R-539." evidence="4">
    <original>Q</original>
    <variation>W</variation>
    <location>
        <position position="535"/>
    </location>
</feature>
<feature type="mutagenesis site" description="Disruption of interaction with Ccz1; when associated with A-535 or W-535." evidence="4">
    <original>D</original>
    <variation>R</variation>
    <location>
        <position position="539"/>
    </location>
</feature>
<feature type="strand" evidence="11">
    <location>
        <begin position="10"/>
        <end position="12"/>
    </location>
</feature>
<feature type="strand" evidence="11">
    <location>
        <begin position="28"/>
        <end position="31"/>
    </location>
</feature>
<feature type="turn" evidence="11">
    <location>
        <begin position="32"/>
        <end position="35"/>
    </location>
</feature>
<feature type="strand" evidence="11">
    <location>
        <begin position="36"/>
        <end position="41"/>
    </location>
</feature>
<feature type="strand" evidence="11">
    <location>
        <begin position="44"/>
        <end position="51"/>
    </location>
</feature>
<feature type="strand" evidence="11">
    <location>
        <begin position="68"/>
        <end position="70"/>
    </location>
</feature>
<feature type="strand" evidence="11">
    <location>
        <begin position="74"/>
        <end position="77"/>
    </location>
</feature>
<feature type="strand" evidence="11">
    <location>
        <begin position="83"/>
        <end position="89"/>
    </location>
</feature>
<feature type="strand" evidence="11">
    <location>
        <begin position="92"/>
        <end position="97"/>
    </location>
</feature>
<feature type="strand" evidence="11">
    <location>
        <begin position="117"/>
        <end position="122"/>
    </location>
</feature>
<feature type="strand" evidence="11">
    <location>
        <begin position="124"/>
        <end position="142"/>
    </location>
</feature>
<feature type="turn" evidence="11">
    <location>
        <begin position="143"/>
        <end position="146"/>
    </location>
</feature>
<feature type="strand" evidence="11">
    <location>
        <begin position="147"/>
        <end position="155"/>
    </location>
</feature>
<feature type="strand" evidence="11">
    <location>
        <begin position="161"/>
        <end position="163"/>
    </location>
</feature>
<feature type="strand" evidence="11">
    <location>
        <begin position="165"/>
        <end position="167"/>
    </location>
</feature>
<feature type="strand" evidence="11">
    <location>
        <begin position="169"/>
        <end position="173"/>
    </location>
</feature>
<feature type="strand" evidence="11">
    <location>
        <begin position="175"/>
        <end position="178"/>
    </location>
</feature>
<feature type="strand" evidence="11">
    <location>
        <begin position="180"/>
        <end position="186"/>
    </location>
</feature>
<feature type="strand" evidence="11">
    <location>
        <begin position="189"/>
        <end position="192"/>
    </location>
</feature>
<feature type="turn" evidence="11">
    <location>
        <begin position="207"/>
        <end position="209"/>
    </location>
</feature>
<feature type="strand" evidence="11">
    <location>
        <begin position="210"/>
        <end position="215"/>
    </location>
</feature>
<feature type="strand" evidence="11">
    <location>
        <begin position="218"/>
        <end position="226"/>
    </location>
</feature>
<feature type="strand" evidence="11">
    <location>
        <begin position="228"/>
        <end position="230"/>
    </location>
</feature>
<feature type="strand" evidence="11">
    <location>
        <begin position="233"/>
        <end position="239"/>
    </location>
</feature>
<feature type="strand" evidence="11">
    <location>
        <begin position="242"/>
        <end position="245"/>
    </location>
</feature>
<feature type="strand" evidence="11">
    <location>
        <begin position="248"/>
        <end position="254"/>
    </location>
</feature>
<feature type="strand" evidence="11">
    <location>
        <begin position="262"/>
        <end position="266"/>
    </location>
</feature>
<feature type="strand" evidence="11">
    <location>
        <begin position="269"/>
        <end position="273"/>
    </location>
</feature>
<feature type="strand" evidence="11">
    <location>
        <begin position="275"/>
        <end position="277"/>
    </location>
</feature>
<feature type="strand" evidence="11">
    <location>
        <begin position="280"/>
        <end position="283"/>
    </location>
</feature>
<feature type="strand" evidence="11">
    <location>
        <begin position="285"/>
        <end position="287"/>
    </location>
</feature>
<feature type="strand" evidence="11">
    <location>
        <begin position="290"/>
        <end position="292"/>
    </location>
</feature>
<feature type="strand" evidence="11">
    <location>
        <begin position="295"/>
        <end position="298"/>
    </location>
</feature>
<feature type="strand" evidence="11">
    <location>
        <begin position="337"/>
        <end position="339"/>
    </location>
</feature>
<feature type="strand" evidence="11">
    <location>
        <begin position="341"/>
        <end position="343"/>
    </location>
</feature>
<feature type="turn" evidence="11">
    <location>
        <begin position="344"/>
        <end position="347"/>
    </location>
</feature>
<feature type="strand" evidence="11">
    <location>
        <begin position="348"/>
        <end position="350"/>
    </location>
</feature>
<feature type="strand" evidence="11">
    <location>
        <begin position="352"/>
        <end position="354"/>
    </location>
</feature>
<feature type="helix" evidence="11">
    <location>
        <begin position="359"/>
        <end position="362"/>
    </location>
</feature>
<feature type="helix" evidence="11">
    <location>
        <begin position="366"/>
        <end position="373"/>
    </location>
</feature>
<feature type="helix" evidence="11">
    <location>
        <begin position="380"/>
        <end position="392"/>
    </location>
</feature>
<feature type="helix" evidence="11">
    <location>
        <begin position="400"/>
        <end position="422"/>
    </location>
</feature>
<feature type="helix" evidence="11">
    <location>
        <begin position="449"/>
        <end position="457"/>
    </location>
</feature>
<feature type="helix" evidence="11">
    <location>
        <begin position="466"/>
        <end position="478"/>
    </location>
</feature>
<feature type="helix" evidence="11">
    <location>
        <begin position="485"/>
        <end position="497"/>
    </location>
</feature>
<feature type="helix" evidence="11">
    <location>
        <begin position="501"/>
        <end position="510"/>
    </location>
</feature>
<feature type="helix" evidence="11">
    <location>
        <begin position="517"/>
        <end position="525"/>
    </location>
</feature>
<feature type="helix" evidence="11">
    <location>
        <begin position="531"/>
        <end position="543"/>
    </location>
</feature>
<feature type="helix" evidence="11">
    <location>
        <begin position="547"/>
        <end position="557"/>
    </location>
</feature>
<feature type="helix" evidence="11">
    <location>
        <begin position="560"/>
        <end position="570"/>
    </location>
</feature>
<feature type="strand" evidence="11">
    <location>
        <begin position="573"/>
        <end position="575"/>
    </location>
</feature>
<feature type="helix" evidence="11">
    <location>
        <begin position="579"/>
        <end position="588"/>
    </location>
</feature>
<feature type="helix" evidence="11">
    <location>
        <begin position="591"/>
        <end position="609"/>
    </location>
</feature>
<feature type="strand" evidence="11">
    <location>
        <begin position="610"/>
        <end position="612"/>
    </location>
</feature>
<feature type="helix" evidence="11">
    <location>
        <begin position="616"/>
        <end position="618"/>
    </location>
</feature>
<feature type="helix" evidence="11">
    <location>
        <begin position="621"/>
        <end position="630"/>
    </location>
</feature>
<gene>
    <name evidence="5 8" type="primary">Bulli</name>
    <name evidence="8" type="ORF">CG8270</name>
</gene>
<dbReference type="EMBL" id="AE014296">
    <property type="protein sequence ID" value="AAF50661.3"/>
    <property type="molecule type" value="Genomic_DNA"/>
</dbReference>
<dbReference type="EMBL" id="BT060441">
    <property type="protein sequence ID" value="ACN22206.1"/>
    <property type="status" value="ALT_SEQ"/>
    <property type="molecule type" value="mRNA"/>
</dbReference>
<dbReference type="RefSeq" id="NP_648047.2">
    <property type="nucleotide sequence ID" value="NM_139790.3"/>
</dbReference>
<dbReference type="PDB" id="8C7G">
    <property type="method" value="EM"/>
    <property type="resolution" value="3.20 A"/>
    <property type="chains" value="A=1-642"/>
</dbReference>
<dbReference type="PDB" id="8JBE">
    <property type="method" value="EM"/>
    <property type="resolution" value="3.25 A"/>
    <property type="chains" value="A=1-642"/>
</dbReference>
<dbReference type="PDBsum" id="8C7G"/>
<dbReference type="PDBsum" id="8JBE"/>
<dbReference type="EMDB" id="EMD-16457"/>
<dbReference type="EMDB" id="EMD-36143"/>
<dbReference type="SMR" id="Q9VRX1"/>
<dbReference type="ComplexPortal" id="CPX-2331">
    <property type="entry name" value="MON1-CCZ1 guanyl-nucleotide exchange factor complex"/>
</dbReference>
<dbReference type="FunCoup" id="Q9VRX1">
    <property type="interactions" value="1211"/>
</dbReference>
<dbReference type="STRING" id="7227.FBpp0292155"/>
<dbReference type="GlyGen" id="Q9VRX1">
    <property type="glycosylation" value="1 site"/>
</dbReference>
<dbReference type="PaxDb" id="7227-FBpp0292155"/>
<dbReference type="DNASU" id="38734"/>
<dbReference type="EnsemblMetazoa" id="FBtr0303036">
    <property type="protein sequence ID" value="FBpp0292155"/>
    <property type="gene ID" value="FBgn0035703"/>
</dbReference>
<dbReference type="GeneID" id="38734"/>
<dbReference type="KEGG" id="dme:Dmel_CG8270"/>
<dbReference type="UCSC" id="CG8270-RA">
    <property type="organism name" value="d. melanogaster"/>
</dbReference>
<dbReference type="AGR" id="FB:FBgn0035703"/>
<dbReference type="CTD" id="38734"/>
<dbReference type="FlyBase" id="FBgn0035703">
    <property type="gene designation" value="Bulli"/>
</dbReference>
<dbReference type="VEuPathDB" id="VectorBase:FBgn0035703"/>
<dbReference type="eggNOG" id="KOG2377">
    <property type="taxonomic scope" value="Eukaryota"/>
</dbReference>
<dbReference type="GeneTree" id="ENSGT00390000009127"/>
<dbReference type="HOGENOM" id="CLU_022842_0_1_1"/>
<dbReference type="InParanoid" id="Q9VRX1"/>
<dbReference type="OMA" id="VWVHNRE"/>
<dbReference type="OrthoDB" id="26384at2759"/>
<dbReference type="PhylomeDB" id="Q9VRX1"/>
<dbReference type="BioGRID-ORCS" id="38734">
    <property type="hits" value="0 hits in 1 CRISPR screen"/>
</dbReference>
<dbReference type="GenomeRNAi" id="38734"/>
<dbReference type="PRO" id="PR:Q9VRX1"/>
<dbReference type="Proteomes" id="UP000000803">
    <property type="component" value="Chromosome 3L"/>
</dbReference>
<dbReference type="Bgee" id="FBgn0035703">
    <property type="expression patterns" value="Expressed in saliva-secreting gland and 43 other cell types or tissues"/>
</dbReference>
<dbReference type="ExpressionAtlas" id="Q9VRX1">
    <property type="expression patterns" value="baseline and differential"/>
</dbReference>
<dbReference type="GO" id="GO:0031902">
    <property type="term" value="C:late endosome membrane"/>
    <property type="evidence" value="ECO:0000318"/>
    <property type="project" value="GO_Central"/>
</dbReference>
<dbReference type="GO" id="GO:0035658">
    <property type="term" value="C:Mon1-Ccz1 complex"/>
    <property type="evidence" value="ECO:0000353"/>
    <property type="project" value="UniProtKB"/>
</dbReference>
<dbReference type="GO" id="GO:0005091">
    <property type="term" value="F:guanyl-nucleotide exchange factor adaptor activity"/>
    <property type="evidence" value="ECO:0000314"/>
    <property type="project" value="FlyBase"/>
</dbReference>
<dbReference type="GO" id="GO:0010506">
    <property type="term" value="P:regulation of autophagy"/>
    <property type="evidence" value="ECO:0000318"/>
    <property type="project" value="GO_Central"/>
</dbReference>
<dbReference type="InterPro" id="IPR040371">
    <property type="entry name" value="RMC1"/>
</dbReference>
<dbReference type="InterPro" id="IPR009755">
    <property type="entry name" value="RMC1_C"/>
</dbReference>
<dbReference type="InterPro" id="IPR049040">
    <property type="entry name" value="RMC1_N"/>
</dbReference>
<dbReference type="PANTHER" id="PTHR12897">
    <property type="entry name" value="COLON CANCER-ASSOCIATED PROTEIN MIC1"/>
    <property type="match status" value="1"/>
</dbReference>
<dbReference type="PANTHER" id="PTHR12897:SF4">
    <property type="entry name" value="REGULATOR OF MON1-CCZ1 COMPLEX"/>
    <property type="match status" value="1"/>
</dbReference>
<dbReference type="Pfam" id="PF07035">
    <property type="entry name" value="RMC1_C"/>
    <property type="match status" value="1"/>
</dbReference>
<dbReference type="Pfam" id="PF21029">
    <property type="entry name" value="RMC1_N"/>
    <property type="match status" value="1"/>
</dbReference>
<dbReference type="SUPFAM" id="SSF82171">
    <property type="entry name" value="DPP6 N-terminal domain-like"/>
    <property type="match status" value="1"/>
</dbReference>
<keyword id="KW-0002">3D-structure</keyword>
<keyword id="KW-0967">Endosome</keyword>
<keyword id="KW-1185">Reference proteome</keyword>
<keyword id="KW-0813">Transport</keyword>
<protein>
    <recommendedName>
        <fullName evidence="6">Regulator of MON1-CCZ1 complex</fullName>
    </recommendedName>
    <alternativeName>
        <fullName evidence="5">Protein Bulli</fullName>
    </alternativeName>
</protein>
<comment type="function">
    <text evidence="2 3">Positive regulator of the Rab7 guanyl-nucleotide exchange activity of the Mon1-Ccz1 complex, possibly by enhancing its endosomal membrane association (PubMed:32391792, PubMed:32499409). As part of the Mon1-Ccz1 complex involved in endolysosomal biogenesis possibly by mediating Rab conversion, the replacement of Rab5 with Rab7 during late endosome maturation (PubMed:32499409).</text>
</comment>
<comment type="subunit">
    <text evidence="3 4">Component of the Mon1-Ccz1 guanyl-nucleotide exchange factor complex made up of Mon1, Ccz1 and Bulli; the interaction of Bulli with the Mon1-Ccz1 heterodimer is mediated via the C-terminal Mic1 domain of Bulli (PubMed:32499409, PubMed:37155863). Mon1 and Ccz1 form a stable complex which displays Rab7 GEF activity with or without Bulli; GEF activity is enhanced by Bulli possibly by improving membrane association of the complex (PubMed:32499409, PubMed:37155863).</text>
</comment>
<comment type="subcellular location">
    <subcellularLocation>
        <location evidence="3">Late endosome</location>
    </subcellularLocation>
    <text evidence="3">Colocalizes with Rab7, but not Rab5 positive endosomal structures.</text>
</comment>
<comment type="domain">
    <text evidence="4">The C-terminal Mic1 domain consists of an alpha-solenoid structure that acts as a protein interaction scaffold for the CCZ1-MON1 complex.</text>
</comment>
<comment type="disruption phenotype">
    <text evidence="3">Viable and fertile but with reduced lifespan, possibly due to impaired nephrocyte scavenger function (PubMed:32499409). Severely impaired nephrocyte function under physiological stress conditions such as aging (PubMed:32499409). Accumulation in nephrocytes of third instar larvae of enlarged alpha-vesicles (late endosomes) due to defects in endolysosomal maturation and lysosome acidification (PubMed:32499409).</text>
</comment>
<comment type="miscellaneous">
    <text evidence="5">'Bulli' is the nickname of a classical German bus from the 1970s (the Volkswagen Type 2 van), which facilitated cargo trafficking.</text>
</comment>
<comment type="similarity">
    <text evidence="6">Belongs to the RMC1 family.</text>
</comment>
<comment type="sequence caution" evidence="6">
    <conflict type="erroneous gene model prediction">
        <sequence resource="EMBL-CDS" id="ACN22206"/>
    </conflict>
</comment>
<comment type="sequence caution" evidence="6">
    <conflict type="erroneous translation">
        <sequence resource="EMBL-CDS" id="ACN22206"/>
    </conflict>
</comment>
<accession>Q9VRX1</accession>
<accession>C0HDN5</accession>
<reference evidence="10" key="1">
    <citation type="journal article" date="2000" name="Science">
        <title>The genome sequence of Drosophila melanogaster.</title>
        <authorList>
            <person name="Adams M.D."/>
            <person name="Celniker S.E."/>
            <person name="Holt R.A."/>
            <person name="Evans C.A."/>
            <person name="Gocayne J.D."/>
            <person name="Amanatides P.G."/>
            <person name="Scherer S.E."/>
            <person name="Li P.W."/>
            <person name="Hoskins R.A."/>
            <person name="Galle R.F."/>
            <person name="George R.A."/>
            <person name="Lewis S.E."/>
            <person name="Richards S."/>
            <person name="Ashburner M."/>
            <person name="Henderson S.N."/>
            <person name="Sutton G.G."/>
            <person name="Wortman J.R."/>
            <person name="Yandell M.D."/>
            <person name="Zhang Q."/>
            <person name="Chen L.X."/>
            <person name="Brandon R.C."/>
            <person name="Rogers Y.-H.C."/>
            <person name="Blazej R.G."/>
            <person name="Champe M."/>
            <person name="Pfeiffer B.D."/>
            <person name="Wan K.H."/>
            <person name="Doyle C."/>
            <person name="Baxter E.G."/>
            <person name="Helt G."/>
            <person name="Nelson C.R."/>
            <person name="Miklos G.L.G."/>
            <person name="Abril J.F."/>
            <person name="Agbayani A."/>
            <person name="An H.-J."/>
            <person name="Andrews-Pfannkoch C."/>
            <person name="Baldwin D."/>
            <person name="Ballew R.M."/>
            <person name="Basu A."/>
            <person name="Baxendale J."/>
            <person name="Bayraktaroglu L."/>
            <person name="Beasley E.M."/>
            <person name="Beeson K.Y."/>
            <person name="Benos P.V."/>
            <person name="Berman B.P."/>
            <person name="Bhandari D."/>
            <person name="Bolshakov S."/>
            <person name="Borkova D."/>
            <person name="Botchan M.R."/>
            <person name="Bouck J."/>
            <person name="Brokstein P."/>
            <person name="Brottier P."/>
            <person name="Burtis K.C."/>
            <person name="Busam D.A."/>
            <person name="Butler H."/>
            <person name="Cadieu E."/>
            <person name="Center A."/>
            <person name="Chandra I."/>
            <person name="Cherry J.M."/>
            <person name="Cawley S."/>
            <person name="Dahlke C."/>
            <person name="Davenport L.B."/>
            <person name="Davies P."/>
            <person name="de Pablos B."/>
            <person name="Delcher A."/>
            <person name="Deng Z."/>
            <person name="Mays A.D."/>
            <person name="Dew I."/>
            <person name="Dietz S.M."/>
            <person name="Dodson K."/>
            <person name="Doup L.E."/>
            <person name="Downes M."/>
            <person name="Dugan-Rocha S."/>
            <person name="Dunkov B.C."/>
            <person name="Dunn P."/>
            <person name="Durbin K.J."/>
            <person name="Evangelista C.C."/>
            <person name="Ferraz C."/>
            <person name="Ferriera S."/>
            <person name="Fleischmann W."/>
            <person name="Fosler C."/>
            <person name="Gabrielian A.E."/>
            <person name="Garg N.S."/>
            <person name="Gelbart W.M."/>
            <person name="Glasser K."/>
            <person name="Glodek A."/>
            <person name="Gong F."/>
            <person name="Gorrell J.H."/>
            <person name="Gu Z."/>
            <person name="Guan P."/>
            <person name="Harris M."/>
            <person name="Harris N.L."/>
            <person name="Harvey D.A."/>
            <person name="Heiman T.J."/>
            <person name="Hernandez J.R."/>
            <person name="Houck J."/>
            <person name="Hostin D."/>
            <person name="Houston K.A."/>
            <person name="Howland T.J."/>
            <person name="Wei M.-H."/>
            <person name="Ibegwam C."/>
            <person name="Jalali M."/>
            <person name="Kalush F."/>
            <person name="Karpen G.H."/>
            <person name="Ke Z."/>
            <person name="Kennison J.A."/>
            <person name="Ketchum K.A."/>
            <person name="Kimmel B.E."/>
            <person name="Kodira C.D."/>
            <person name="Kraft C.L."/>
            <person name="Kravitz S."/>
            <person name="Kulp D."/>
            <person name="Lai Z."/>
            <person name="Lasko P."/>
            <person name="Lei Y."/>
            <person name="Levitsky A.A."/>
            <person name="Li J.H."/>
            <person name="Li Z."/>
            <person name="Liang Y."/>
            <person name="Lin X."/>
            <person name="Liu X."/>
            <person name="Mattei B."/>
            <person name="McIntosh T.C."/>
            <person name="McLeod M.P."/>
            <person name="McPherson D."/>
            <person name="Merkulov G."/>
            <person name="Milshina N.V."/>
            <person name="Mobarry C."/>
            <person name="Morris J."/>
            <person name="Moshrefi A."/>
            <person name="Mount S.M."/>
            <person name="Moy M."/>
            <person name="Murphy B."/>
            <person name="Murphy L."/>
            <person name="Muzny D.M."/>
            <person name="Nelson D.L."/>
            <person name="Nelson D.R."/>
            <person name="Nelson K.A."/>
            <person name="Nixon K."/>
            <person name="Nusskern D.R."/>
            <person name="Pacleb J.M."/>
            <person name="Palazzolo M."/>
            <person name="Pittman G.S."/>
            <person name="Pan S."/>
            <person name="Pollard J."/>
            <person name="Puri V."/>
            <person name="Reese M.G."/>
            <person name="Reinert K."/>
            <person name="Remington K."/>
            <person name="Saunders R.D.C."/>
            <person name="Scheeler F."/>
            <person name="Shen H."/>
            <person name="Shue B.C."/>
            <person name="Siden-Kiamos I."/>
            <person name="Simpson M."/>
            <person name="Skupski M.P."/>
            <person name="Smith T.J."/>
            <person name="Spier E."/>
            <person name="Spradling A.C."/>
            <person name="Stapleton M."/>
            <person name="Strong R."/>
            <person name="Sun E."/>
            <person name="Svirskas R."/>
            <person name="Tector C."/>
            <person name="Turner R."/>
            <person name="Venter E."/>
            <person name="Wang A.H."/>
            <person name="Wang X."/>
            <person name="Wang Z.-Y."/>
            <person name="Wassarman D.A."/>
            <person name="Weinstock G.M."/>
            <person name="Weissenbach J."/>
            <person name="Williams S.M."/>
            <person name="Woodage T."/>
            <person name="Worley K.C."/>
            <person name="Wu D."/>
            <person name="Yang S."/>
            <person name="Yao Q.A."/>
            <person name="Ye J."/>
            <person name="Yeh R.-F."/>
            <person name="Zaveri J.S."/>
            <person name="Zhan M."/>
            <person name="Zhang G."/>
            <person name="Zhao Q."/>
            <person name="Zheng L."/>
            <person name="Zheng X.H."/>
            <person name="Zhong F.N."/>
            <person name="Zhong W."/>
            <person name="Zhou X."/>
            <person name="Zhu S.C."/>
            <person name="Zhu X."/>
            <person name="Smith H.O."/>
            <person name="Gibbs R.A."/>
            <person name="Myers E.W."/>
            <person name="Rubin G.M."/>
            <person name="Venter J.C."/>
        </authorList>
    </citation>
    <scope>NUCLEOTIDE SEQUENCE [LARGE SCALE GENOMIC DNA]</scope>
    <source>
        <strain evidence="10">Berkeley</strain>
    </source>
</reference>
<reference evidence="10" key="2">
    <citation type="journal article" date="2002" name="Genome Biol.">
        <title>Annotation of the Drosophila melanogaster euchromatic genome: a systematic review.</title>
        <authorList>
            <person name="Misra S."/>
            <person name="Crosby M.A."/>
            <person name="Mungall C.J."/>
            <person name="Matthews B.B."/>
            <person name="Campbell K.S."/>
            <person name="Hradecky P."/>
            <person name="Huang Y."/>
            <person name="Kaminker J.S."/>
            <person name="Millburn G.H."/>
            <person name="Prochnik S.E."/>
            <person name="Smith C.D."/>
            <person name="Tupy J.L."/>
            <person name="Whitfield E.J."/>
            <person name="Bayraktaroglu L."/>
            <person name="Berman B.P."/>
            <person name="Bettencourt B.R."/>
            <person name="Celniker S.E."/>
            <person name="de Grey A.D.N.J."/>
            <person name="Drysdale R.A."/>
            <person name="Harris N.L."/>
            <person name="Richter J."/>
            <person name="Russo S."/>
            <person name="Schroeder A.J."/>
            <person name="Shu S.Q."/>
            <person name="Stapleton M."/>
            <person name="Yamada C."/>
            <person name="Ashburner M."/>
            <person name="Gelbart W.M."/>
            <person name="Rubin G.M."/>
            <person name="Lewis S.E."/>
        </authorList>
    </citation>
    <scope>GENOME REANNOTATION</scope>
    <source>
        <strain evidence="10">Berkeley</strain>
    </source>
</reference>
<reference evidence="7" key="3">
    <citation type="submission" date="2009-02" db="EMBL/GenBank/DDBJ databases">
        <authorList>
            <person name="Carlson J."/>
            <person name="Booth B."/>
            <person name="Frise E."/>
            <person name="Sandler J."/>
            <person name="Wan K."/>
            <person name="Yu C."/>
            <person name="Celniker S."/>
        </authorList>
    </citation>
    <scope>NUCLEOTIDE SEQUENCE [LARGE SCALE MRNA]</scope>
</reference>
<reference evidence="6" key="4">
    <citation type="journal article" date="2020" name="Elife">
        <title>A conserved and regulated mechanism drives endosomal Rab transition.</title>
        <authorList>
            <person name="Langemeyer L."/>
            <person name="Borchers A.C."/>
            <person name="Herrmann E."/>
            <person name="Fuellbrunn N."/>
            <person name="Han Y."/>
            <person name="Perz A."/>
            <person name="Auffarth K."/>
            <person name="Kuemmel D."/>
            <person name="Ungermann C."/>
        </authorList>
    </citation>
    <scope>FUNCTION</scope>
</reference>
<reference evidence="6" key="5">
    <citation type="journal article" date="2020" name="J. Cell Sci.">
        <title>A trimeric metazoan Rab7 GEF complex is crucial for endocytosis and scavenger function.</title>
        <authorList>
            <person name="Dehnen L."/>
            <person name="Janz M."/>
            <person name="Verma J.K."/>
            <person name="Psathaki O.E."/>
            <person name="Langemeyer L."/>
            <person name="Froehlich F."/>
            <person name="Heinisch J.J."/>
            <person name="Meyer H."/>
            <person name="Ungermann C."/>
            <person name="Paululat A."/>
        </authorList>
    </citation>
    <scope>FUNCTION</scope>
    <scope>IDENTIFICATION IN THE MON1-CCZ1 GUANYL-NUCLEOTIDE EXCHANGE FACTOR COMPLEX</scope>
    <scope>INTERACTION WITH MON1 AND CCZ1</scope>
    <scope>SUBCELLULAR LOCATION</scope>
    <scope>DISRUPTION PHENOTYPE</scope>
</reference>
<reference evidence="9" key="6">
    <citation type="journal article" date="2023" name="Proc. Natl. Acad. Sci. U.S.A.">
        <title>Structure of the metazoan Rab7 GEF complex Mon1-Ccz1-Bulli.</title>
        <authorList>
            <person name="Herrmann E."/>
            <person name="Schaefer J.H."/>
            <person name="Wilmes S."/>
            <person name="Ungermann C."/>
            <person name="Moeller A."/>
            <person name="Kuemmel D."/>
        </authorList>
    </citation>
    <scope>STRUCTURE BY ELECTRON MICROSCOPY (3.2 ANGSTROMS) IN COMPLEX WITH MON1 AND CCZ1</scope>
    <scope>SUBUNIT</scope>
    <scope>DOMAIN</scope>
    <scope>MUTAGENESIS OF GLN-535 AND ASP-539</scope>
</reference>
<organism evidence="10">
    <name type="scientific">Drosophila melanogaster</name>
    <name type="common">Fruit fly</name>
    <dbReference type="NCBI Taxonomy" id="7227"/>
    <lineage>
        <taxon>Eukaryota</taxon>
        <taxon>Metazoa</taxon>
        <taxon>Ecdysozoa</taxon>
        <taxon>Arthropoda</taxon>
        <taxon>Hexapoda</taxon>
        <taxon>Insecta</taxon>
        <taxon>Pterygota</taxon>
        <taxon>Neoptera</taxon>
        <taxon>Endopterygota</taxon>
        <taxon>Diptera</taxon>
        <taxon>Brachycera</taxon>
        <taxon>Muscomorpha</taxon>
        <taxon>Ephydroidea</taxon>
        <taxon>Drosophilidae</taxon>
        <taxon>Drosophila</taxon>
        <taxon>Sophophora</taxon>
    </lineage>
</organism>
<sequence>MDNSNGIHYIELTPNPIRFDAVSQLTNVFFDDSNKQIFAVRSGGATGVVVKGPGSPDDVVISFCMSDRGGAIRSIKFSPDNQILAVQRKENSVEFICFQGDQPLLQDIITHQVKTLIHGFVWVHNREVALISNTGVEVYTVVPEKRQVRSVKSLSIGIKWFAWCCDANVALLCTSEGNSLIPVLVKQKVITKLPKVDLGNPSRDVQESKVTLGQVYGVLAVLILQSNSTTGLMEVEVHLLNGPGLAPRKCHVLRLSLLGRFAINTVDNLIVVHHQASGTSLLFDISLPGEVINEITYHTPITPGRSIKPFGLKLPSLSPDGQILQCELYSTHWVLFQPNIVIDAKLGCMWFLNLCIEPLCQLISDRIRLTEFLLQRSNGKQMLLKVIGQLVDDQYKGTLLPVLETIFSRINKIYASWVQLELQNQTAQPSNVKTTTLKQSTPPIVLIEQLDMVQIFQRIARRPYTESILMLYLQSLNKFNIAAQEELSKMIISELISNRSFDTLRRLVSYSMLLESKSVACFLLSHSNVDTAISQVAIDMLGRIEAHEIIIEVMLGQGKVIDALRLAKNSMGLEKVPARKFLEAAHKTKDDLIFHSVYRFFQMRNLKLYETLSFPKAEQCTEFIQHYNNTFPADNPTRQPVS</sequence>
<evidence type="ECO:0000255" key="1"/>
<evidence type="ECO:0000269" key="2">
    <source>
    </source>
</evidence>
<evidence type="ECO:0000269" key="3">
    <source>
    </source>
</evidence>
<evidence type="ECO:0000269" key="4">
    <source>
    </source>
</evidence>
<evidence type="ECO:0000303" key="5">
    <source>
    </source>
</evidence>
<evidence type="ECO:0000305" key="6"/>
<evidence type="ECO:0000312" key="7">
    <source>
        <dbReference type="EMBL" id="ACN22206.1"/>
    </source>
</evidence>
<evidence type="ECO:0000312" key="8">
    <source>
        <dbReference type="FlyBase" id="FBgn0035703"/>
    </source>
</evidence>
<evidence type="ECO:0000312" key="9">
    <source>
        <dbReference type="PDB" id="8C7G"/>
    </source>
</evidence>
<evidence type="ECO:0000312" key="10">
    <source>
        <dbReference type="Proteomes" id="UP000000803"/>
    </source>
</evidence>
<evidence type="ECO:0007829" key="11">
    <source>
        <dbReference type="PDB" id="8C7G"/>
    </source>
</evidence>
<proteinExistence type="evidence at protein level"/>